<name>RAPA_SHEWM</name>
<gene>
    <name evidence="1" type="primary">rapA</name>
    <name type="ordered locus">Swoo_4324</name>
</gene>
<comment type="function">
    <text evidence="1">Transcription regulator that activates transcription by stimulating RNA polymerase (RNAP) recycling in case of stress conditions such as supercoiled DNA or high salt concentrations. Probably acts by releasing the RNAP, when it is trapped or immobilized on tightly supercoiled DNA. Does not activate transcription on linear DNA. Probably not involved in DNA repair.</text>
</comment>
<comment type="subunit">
    <text evidence="1">Interacts with the RNAP. Has a higher affinity for the core RNAP than for the holoenzyme. Its ATPase activity is stimulated by binding to RNAP.</text>
</comment>
<comment type="similarity">
    <text evidence="1">Belongs to the SNF2/RAD54 helicase family. RapA subfamily.</text>
</comment>
<organism>
    <name type="scientific">Shewanella woodyi (strain ATCC 51908 / MS32)</name>
    <dbReference type="NCBI Taxonomy" id="392500"/>
    <lineage>
        <taxon>Bacteria</taxon>
        <taxon>Pseudomonadati</taxon>
        <taxon>Pseudomonadota</taxon>
        <taxon>Gammaproteobacteria</taxon>
        <taxon>Alteromonadales</taxon>
        <taxon>Shewanellaceae</taxon>
        <taxon>Shewanella</taxon>
    </lineage>
</organism>
<feature type="chain" id="PRO_1000188192" description="RNA polymerase-associated protein RapA">
    <location>
        <begin position="1"/>
        <end position="968"/>
    </location>
</feature>
<feature type="domain" description="Helicase ATP-binding" evidence="1">
    <location>
        <begin position="163"/>
        <end position="332"/>
    </location>
</feature>
<feature type="domain" description="Helicase C-terminal" evidence="1">
    <location>
        <begin position="491"/>
        <end position="645"/>
    </location>
</feature>
<feature type="short sequence motif" description="DEAH box">
    <location>
        <begin position="278"/>
        <end position="281"/>
    </location>
</feature>
<feature type="binding site" evidence="1">
    <location>
        <begin position="176"/>
        <end position="183"/>
    </location>
    <ligand>
        <name>ATP</name>
        <dbReference type="ChEBI" id="CHEBI:30616"/>
    </ligand>
</feature>
<sequence length="968" mass="108948">MPFSLGQRWISDTESELGLGTVVAVEGRMVTVMFPATDENRMFSRADAPLTRVIFNPGDKAESHEGWSLTVSEVEEKDNLIIYHGIHDETGEQVSLRETLLNHNIRFNKPQDRLFAGQIDRLERFGIRYQCQQLRHKLATSDMLGLQGPRVGLIPHQQWIAHEVGRRFAPRVLLADEVGLGKTIEAGLIIHQQLLTGRAERILVIVPDTLRHQWLVEMLRRFNLKFSVFDEDRCVEAYADSDNPFYTEQLVICSLELLRKKRRLDQALAADWDLMVVDEAHHLEWTEDAPSRAYRIVEALSEEIPGVLLLTATPDQLGHQSHFARLRLLDPDRFYDYEAFLKEETNYADIASTADALAGNEPLSQEIIDNLKTQLAEKDITAATDIIQATDADVDQQQAARDALLQDLLDRHGTGRVLYRNSRASVKGFPTRIFNQYPQKMPAQYVTAARVGAMMNGHLDTAGKVKQALSPEKIYQEFESSSASWWKFDPRVDWLIDFLKENRREKVLIIASQAETALSLEEALRTREGIQATVFHEGMSIIERDKAGAYFAQETGGAQALICSEIGSEGRNFQFASQLILFDLPLNPDLLEQRIGRLDRIGQNNDVSIHVPYLEDTAQESLMQWYHKGLNAFEQTCPSGHILFNEFSESLLNVLISQDKEVLEQVLSDTQTRYAELKSVMEQGRDKLLEINSHGGERANKLVNALAERDEDTNLIGSVIRLWDIIGVEQEDSGENAIVLRPSEHMMFPTYPGLPEDGITVTFDREMALSRDDIALITQEHPLVQTGLDLITSSETGTTSVAVLKNKSLPAGTIFLELIYMADASAPKSSQLYRYLPPTPVRVLLDKNGNNLADNVNYESFNKQLSAVNRHIASKLVNASQAVLHPLFAKGEEFASSELTLLTESSRAKMTTQLNGELERLEALKAVNPNIRDEELAHLREQMVELNGYLDGAVLQLDAIRLVLVSHA</sequence>
<evidence type="ECO:0000255" key="1">
    <source>
        <dbReference type="HAMAP-Rule" id="MF_01821"/>
    </source>
</evidence>
<keyword id="KW-0010">Activator</keyword>
<keyword id="KW-0067">ATP-binding</keyword>
<keyword id="KW-0238">DNA-binding</keyword>
<keyword id="KW-0347">Helicase</keyword>
<keyword id="KW-0378">Hydrolase</keyword>
<keyword id="KW-0547">Nucleotide-binding</keyword>
<keyword id="KW-1185">Reference proteome</keyword>
<keyword id="KW-0804">Transcription</keyword>
<keyword id="KW-0805">Transcription regulation</keyword>
<proteinExistence type="inferred from homology"/>
<reference key="1">
    <citation type="submission" date="2008-02" db="EMBL/GenBank/DDBJ databases">
        <title>Complete sequence of Shewanella woodyi ATCC 51908.</title>
        <authorList>
            <consortium name="US DOE Joint Genome Institute"/>
            <person name="Copeland A."/>
            <person name="Lucas S."/>
            <person name="Lapidus A."/>
            <person name="Glavina del Rio T."/>
            <person name="Dalin E."/>
            <person name="Tice H."/>
            <person name="Bruce D."/>
            <person name="Goodwin L."/>
            <person name="Pitluck S."/>
            <person name="Sims D."/>
            <person name="Brettin T."/>
            <person name="Detter J.C."/>
            <person name="Han C."/>
            <person name="Kuske C.R."/>
            <person name="Schmutz J."/>
            <person name="Larimer F."/>
            <person name="Land M."/>
            <person name="Hauser L."/>
            <person name="Kyrpides N."/>
            <person name="Lykidis A."/>
            <person name="Zhao J.-S."/>
            <person name="Richardson P."/>
        </authorList>
    </citation>
    <scope>NUCLEOTIDE SEQUENCE [LARGE SCALE GENOMIC DNA]</scope>
    <source>
        <strain>ATCC 51908 / MS32</strain>
    </source>
</reference>
<accession>B1KJA5</accession>
<dbReference type="EC" id="3.6.4.-" evidence="1"/>
<dbReference type="EMBL" id="CP000961">
    <property type="protein sequence ID" value="ACA88577.1"/>
    <property type="molecule type" value="Genomic_DNA"/>
</dbReference>
<dbReference type="RefSeq" id="WP_012326903.1">
    <property type="nucleotide sequence ID" value="NC_010506.1"/>
</dbReference>
<dbReference type="SMR" id="B1KJA5"/>
<dbReference type="STRING" id="392500.Swoo_4324"/>
<dbReference type="KEGG" id="swd:Swoo_4324"/>
<dbReference type="eggNOG" id="COG0553">
    <property type="taxonomic scope" value="Bacteria"/>
</dbReference>
<dbReference type="HOGENOM" id="CLU_011520_0_0_6"/>
<dbReference type="Proteomes" id="UP000002168">
    <property type="component" value="Chromosome"/>
</dbReference>
<dbReference type="GO" id="GO:0005524">
    <property type="term" value="F:ATP binding"/>
    <property type="evidence" value="ECO:0007669"/>
    <property type="project" value="UniProtKB-UniRule"/>
</dbReference>
<dbReference type="GO" id="GO:0003677">
    <property type="term" value="F:DNA binding"/>
    <property type="evidence" value="ECO:0007669"/>
    <property type="project" value="UniProtKB-KW"/>
</dbReference>
<dbReference type="GO" id="GO:0004386">
    <property type="term" value="F:helicase activity"/>
    <property type="evidence" value="ECO:0007669"/>
    <property type="project" value="UniProtKB-UniRule"/>
</dbReference>
<dbReference type="GO" id="GO:0016817">
    <property type="term" value="F:hydrolase activity, acting on acid anhydrides"/>
    <property type="evidence" value="ECO:0007669"/>
    <property type="project" value="InterPro"/>
</dbReference>
<dbReference type="GO" id="GO:0006355">
    <property type="term" value="P:regulation of DNA-templated transcription"/>
    <property type="evidence" value="ECO:0007669"/>
    <property type="project" value="UniProtKB-UniRule"/>
</dbReference>
<dbReference type="CDD" id="cd18011">
    <property type="entry name" value="DEXDc_RapA"/>
    <property type="match status" value="1"/>
</dbReference>
<dbReference type="CDD" id="cd18793">
    <property type="entry name" value="SF2_C_SNF"/>
    <property type="match status" value="1"/>
</dbReference>
<dbReference type="Gene3D" id="2.30.30.140">
    <property type="match status" value="1"/>
</dbReference>
<dbReference type="Gene3D" id="2.30.30.930">
    <property type="match status" value="1"/>
</dbReference>
<dbReference type="Gene3D" id="3.30.360.80">
    <property type="match status" value="1"/>
</dbReference>
<dbReference type="Gene3D" id="6.10.140.1500">
    <property type="match status" value="1"/>
</dbReference>
<dbReference type="Gene3D" id="6.10.140.2230">
    <property type="match status" value="1"/>
</dbReference>
<dbReference type="Gene3D" id="3.40.50.300">
    <property type="entry name" value="P-loop containing nucleotide triphosphate hydrolases"/>
    <property type="match status" value="1"/>
</dbReference>
<dbReference type="Gene3D" id="3.40.50.10810">
    <property type="entry name" value="Tandem AAA-ATPase domain"/>
    <property type="match status" value="1"/>
</dbReference>
<dbReference type="HAMAP" id="MF_01821">
    <property type="entry name" value="Helicase_RapA"/>
    <property type="match status" value="1"/>
</dbReference>
<dbReference type="InterPro" id="IPR014001">
    <property type="entry name" value="Helicase_ATP-bd"/>
</dbReference>
<dbReference type="InterPro" id="IPR001650">
    <property type="entry name" value="Helicase_C-like"/>
</dbReference>
<dbReference type="InterPro" id="IPR023949">
    <property type="entry name" value="Helicase_RapA"/>
</dbReference>
<dbReference type="InterPro" id="IPR027417">
    <property type="entry name" value="P-loop_NTPase"/>
</dbReference>
<dbReference type="InterPro" id="IPR022737">
    <property type="entry name" value="RapA_C"/>
</dbReference>
<dbReference type="InterPro" id="IPR038718">
    <property type="entry name" value="SNF2-like_sf"/>
</dbReference>
<dbReference type="InterPro" id="IPR049730">
    <property type="entry name" value="SNF2/RAD54-like_C"/>
</dbReference>
<dbReference type="InterPro" id="IPR000330">
    <property type="entry name" value="SNF2_N"/>
</dbReference>
<dbReference type="InterPro" id="IPR040765">
    <property type="entry name" value="Tudor_1_RapA"/>
</dbReference>
<dbReference type="InterPro" id="IPR040766">
    <property type="entry name" value="Tudor_2_RapA"/>
</dbReference>
<dbReference type="NCBIfam" id="NF003426">
    <property type="entry name" value="PRK04914.1"/>
    <property type="match status" value="1"/>
</dbReference>
<dbReference type="PANTHER" id="PTHR45766">
    <property type="entry name" value="DNA ANNEALING HELICASE AND ENDONUCLEASE ZRANB3 FAMILY MEMBER"/>
    <property type="match status" value="1"/>
</dbReference>
<dbReference type="PANTHER" id="PTHR45766:SF6">
    <property type="entry name" value="SWI_SNF-RELATED MATRIX-ASSOCIATED ACTIN-DEPENDENT REGULATOR OF CHROMATIN SUBFAMILY A-LIKE PROTEIN 1"/>
    <property type="match status" value="1"/>
</dbReference>
<dbReference type="Pfam" id="PF00271">
    <property type="entry name" value="Helicase_C"/>
    <property type="match status" value="1"/>
</dbReference>
<dbReference type="Pfam" id="PF12137">
    <property type="entry name" value="RapA_C"/>
    <property type="match status" value="1"/>
</dbReference>
<dbReference type="Pfam" id="PF00176">
    <property type="entry name" value="SNF2-rel_dom"/>
    <property type="match status" value="1"/>
</dbReference>
<dbReference type="Pfam" id="PF18339">
    <property type="entry name" value="Tudor_1_RapA"/>
    <property type="match status" value="1"/>
</dbReference>
<dbReference type="Pfam" id="PF18337">
    <property type="entry name" value="Tudor_RapA"/>
    <property type="match status" value="1"/>
</dbReference>
<dbReference type="SMART" id="SM00487">
    <property type="entry name" value="DEXDc"/>
    <property type="match status" value="1"/>
</dbReference>
<dbReference type="SMART" id="SM00490">
    <property type="entry name" value="HELICc"/>
    <property type="match status" value="1"/>
</dbReference>
<dbReference type="SUPFAM" id="SSF52540">
    <property type="entry name" value="P-loop containing nucleoside triphosphate hydrolases"/>
    <property type="match status" value="2"/>
</dbReference>
<dbReference type="PROSITE" id="PS51192">
    <property type="entry name" value="HELICASE_ATP_BIND_1"/>
    <property type="match status" value="1"/>
</dbReference>
<dbReference type="PROSITE" id="PS51194">
    <property type="entry name" value="HELICASE_CTER"/>
    <property type="match status" value="1"/>
</dbReference>
<protein>
    <recommendedName>
        <fullName evidence="1">RNA polymerase-associated protein RapA</fullName>
        <ecNumber evidence="1">3.6.4.-</ecNumber>
    </recommendedName>
    <alternativeName>
        <fullName evidence="1">ATP-dependent helicase HepA</fullName>
    </alternativeName>
</protein>